<dbReference type="EMBL" id="CP000826">
    <property type="protein sequence ID" value="ABV43621.1"/>
    <property type="molecule type" value="Genomic_DNA"/>
</dbReference>
<dbReference type="SMR" id="A8GKI1"/>
<dbReference type="STRING" id="399741.Spro_4528"/>
<dbReference type="KEGG" id="spe:Spro_4528"/>
<dbReference type="eggNOG" id="COG0256">
    <property type="taxonomic scope" value="Bacteria"/>
</dbReference>
<dbReference type="HOGENOM" id="CLU_098841_0_1_6"/>
<dbReference type="OrthoDB" id="9810939at2"/>
<dbReference type="GO" id="GO:0022625">
    <property type="term" value="C:cytosolic large ribosomal subunit"/>
    <property type="evidence" value="ECO:0007669"/>
    <property type="project" value="TreeGrafter"/>
</dbReference>
<dbReference type="GO" id="GO:0008097">
    <property type="term" value="F:5S rRNA binding"/>
    <property type="evidence" value="ECO:0007669"/>
    <property type="project" value="TreeGrafter"/>
</dbReference>
<dbReference type="GO" id="GO:0003735">
    <property type="term" value="F:structural constituent of ribosome"/>
    <property type="evidence" value="ECO:0007669"/>
    <property type="project" value="InterPro"/>
</dbReference>
<dbReference type="GO" id="GO:0006412">
    <property type="term" value="P:translation"/>
    <property type="evidence" value="ECO:0007669"/>
    <property type="project" value="UniProtKB-UniRule"/>
</dbReference>
<dbReference type="CDD" id="cd00432">
    <property type="entry name" value="Ribosomal_L18_L5e"/>
    <property type="match status" value="1"/>
</dbReference>
<dbReference type="FunFam" id="3.30.420.100:FF:000001">
    <property type="entry name" value="50S ribosomal protein L18"/>
    <property type="match status" value="1"/>
</dbReference>
<dbReference type="Gene3D" id="3.30.420.100">
    <property type="match status" value="1"/>
</dbReference>
<dbReference type="HAMAP" id="MF_01337_B">
    <property type="entry name" value="Ribosomal_uL18_B"/>
    <property type="match status" value="1"/>
</dbReference>
<dbReference type="InterPro" id="IPR004389">
    <property type="entry name" value="Ribosomal_uL18_bac-type"/>
</dbReference>
<dbReference type="InterPro" id="IPR005484">
    <property type="entry name" value="Ribosomal_uL18_bac/euk"/>
</dbReference>
<dbReference type="NCBIfam" id="TIGR00060">
    <property type="entry name" value="L18_bact"/>
    <property type="match status" value="1"/>
</dbReference>
<dbReference type="PANTHER" id="PTHR12899">
    <property type="entry name" value="39S RIBOSOMAL PROTEIN L18, MITOCHONDRIAL"/>
    <property type="match status" value="1"/>
</dbReference>
<dbReference type="PANTHER" id="PTHR12899:SF3">
    <property type="entry name" value="LARGE RIBOSOMAL SUBUNIT PROTEIN UL18M"/>
    <property type="match status" value="1"/>
</dbReference>
<dbReference type="Pfam" id="PF00861">
    <property type="entry name" value="Ribosomal_L18p"/>
    <property type="match status" value="1"/>
</dbReference>
<dbReference type="SUPFAM" id="SSF53137">
    <property type="entry name" value="Translational machinery components"/>
    <property type="match status" value="1"/>
</dbReference>
<gene>
    <name evidence="1" type="primary">rplR</name>
    <name type="ordered locus">Spro_4528</name>
</gene>
<reference key="1">
    <citation type="submission" date="2007-09" db="EMBL/GenBank/DDBJ databases">
        <title>Complete sequence of chromosome of Serratia proteamaculans 568.</title>
        <authorList>
            <consortium name="US DOE Joint Genome Institute"/>
            <person name="Copeland A."/>
            <person name="Lucas S."/>
            <person name="Lapidus A."/>
            <person name="Barry K."/>
            <person name="Glavina del Rio T."/>
            <person name="Dalin E."/>
            <person name="Tice H."/>
            <person name="Pitluck S."/>
            <person name="Chain P."/>
            <person name="Malfatti S."/>
            <person name="Shin M."/>
            <person name="Vergez L."/>
            <person name="Schmutz J."/>
            <person name="Larimer F."/>
            <person name="Land M."/>
            <person name="Hauser L."/>
            <person name="Kyrpides N."/>
            <person name="Kim E."/>
            <person name="Taghavi S."/>
            <person name="Newman L."/>
            <person name="Vangronsveld J."/>
            <person name="van der Lelie D."/>
            <person name="Richardson P."/>
        </authorList>
    </citation>
    <scope>NUCLEOTIDE SEQUENCE [LARGE SCALE GENOMIC DNA]</scope>
    <source>
        <strain>568</strain>
    </source>
</reference>
<keyword id="KW-0687">Ribonucleoprotein</keyword>
<keyword id="KW-0689">Ribosomal protein</keyword>
<keyword id="KW-0694">RNA-binding</keyword>
<keyword id="KW-0699">rRNA-binding</keyword>
<protein>
    <recommendedName>
        <fullName evidence="1">Large ribosomal subunit protein uL18</fullName>
    </recommendedName>
    <alternativeName>
        <fullName evidence="2">50S ribosomal protein L18</fullName>
    </alternativeName>
</protein>
<name>RL18_SERP5</name>
<comment type="function">
    <text evidence="1">This is one of the proteins that bind and probably mediate the attachment of the 5S RNA into the large ribosomal subunit, where it forms part of the central protuberance.</text>
</comment>
<comment type="subunit">
    <text evidence="1">Part of the 50S ribosomal subunit; part of the 5S rRNA/L5/L18/L25 subcomplex. Contacts the 5S and 23S rRNAs.</text>
</comment>
<comment type="similarity">
    <text evidence="1">Belongs to the universal ribosomal protein uL18 family.</text>
</comment>
<feature type="chain" id="PRO_1000067644" description="Large ribosomal subunit protein uL18">
    <location>
        <begin position="1"/>
        <end position="117"/>
    </location>
</feature>
<accession>A8GKI1</accession>
<proteinExistence type="inferred from homology"/>
<organism>
    <name type="scientific">Serratia proteamaculans (strain 568)</name>
    <dbReference type="NCBI Taxonomy" id="399741"/>
    <lineage>
        <taxon>Bacteria</taxon>
        <taxon>Pseudomonadati</taxon>
        <taxon>Pseudomonadota</taxon>
        <taxon>Gammaproteobacteria</taxon>
        <taxon>Enterobacterales</taxon>
        <taxon>Yersiniaceae</taxon>
        <taxon>Serratia</taxon>
    </lineage>
</organism>
<evidence type="ECO:0000255" key="1">
    <source>
        <dbReference type="HAMAP-Rule" id="MF_01337"/>
    </source>
</evidence>
<evidence type="ECO:0000305" key="2"/>
<sequence length="117" mass="12772">MDKKSARIRRATRARRKIKELGATRLVVHRTPRHIYAQVIAPNGSEVLVAASTLEKAVTEQLKYSGNKDAAAAVGKALAERALEKGISKVSFDRSGFQYHGRVQALADAAREAGLQF</sequence>